<keyword id="KW-0030">Aminoacyl-tRNA synthetase</keyword>
<keyword id="KW-0067">ATP-binding</keyword>
<keyword id="KW-0963">Cytoplasm</keyword>
<keyword id="KW-0436">Ligase</keyword>
<keyword id="KW-0547">Nucleotide-binding</keyword>
<keyword id="KW-0648">Protein biosynthesis</keyword>
<keyword id="KW-1185">Reference proteome</keyword>
<protein>
    <recommendedName>
        <fullName evidence="1">Glutamine--tRNA ligase</fullName>
        <ecNumber evidence="1">6.1.1.18</ecNumber>
    </recommendedName>
    <alternativeName>
        <fullName evidence="1">Glutaminyl-tRNA synthetase</fullName>
        <shortName evidence="1">GlnRS</shortName>
    </alternativeName>
</protein>
<reference key="1">
    <citation type="journal article" date="2009" name="PLoS Genet.">
        <title>Organised genome dynamics in the Escherichia coli species results in highly diverse adaptive paths.</title>
        <authorList>
            <person name="Touchon M."/>
            <person name="Hoede C."/>
            <person name="Tenaillon O."/>
            <person name="Barbe V."/>
            <person name="Baeriswyl S."/>
            <person name="Bidet P."/>
            <person name="Bingen E."/>
            <person name="Bonacorsi S."/>
            <person name="Bouchier C."/>
            <person name="Bouvet O."/>
            <person name="Calteau A."/>
            <person name="Chiapello H."/>
            <person name="Clermont O."/>
            <person name="Cruveiller S."/>
            <person name="Danchin A."/>
            <person name="Diard M."/>
            <person name="Dossat C."/>
            <person name="Karoui M.E."/>
            <person name="Frapy E."/>
            <person name="Garry L."/>
            <person name="Ghigo J.M."/>
            <person name="Gilles A.M."/>
            <person name="Johnson J."/>
            <person name="Le Bouguenec C."/>
            <person name="Lescat M."/>
            <person name="Mangenot S."/>
            <person name="Martinez-Jehanne V."/>
            <person name="Matic I."/>
            <person name="Nassif X."/>
            <person name="Oztas S."/>
            <person name="Petit M.A."/>
            <person name="Pichon C."/>
            <person name="Rouy Z."/>
            <person name="Ruf C.S."/>
            <person name="Schneider D."/>
            <person name="Tourret J."/>
            <person name="Vacherie B."/>
            <person name="Vallenet D."/>
            <person name="Medigue C."/>
            <person name="Rocha E.P.C."/>
            <person name="Denamur E."/>
        </authorList>
    </citation>
    <scope>NUCLEOTIDE SEQUENCE [LARGE SCALE GENOMIC DNA]</scope>
    <source>
        <strain>S88 / ExPEC</strain>
    </source>
</reference>
<accession>B7MFU7</accession>
<comment type="catalytic activity">
    <reaction evidence="1">
        <text>tRNA(Gln) + L-glutamine + ATP = L-glutaminyl-tRNA(Gln) + AMP + diphosphate</text>
        <dbReference type="Rhea" id="RHEA:20121"/>
        <dbReference type="Rhea" id="RHEA-COMP:9662"/>
        <dbReference type="Rhea" id="RHEA-COMP:9681"/>
        <dbReference type="ChEBI" id="CHEBI:30616"/>
        <dbReference type="ChEBI" id="CHEBI:33019"/>
        <dbReference type="ChEBI" id="CHEBI:58359"/>
        <dbReference type="ChEBI" id="CHEBI:78442"/>
        <dbReference type="ChEBI" id="CHEBI:78521"/>
        <dbReference type="ChEBI" id="CHEBI:456215"/>
        <dbReference type="EC" id="6.1.1.18"/>
    </reaction>
</comment>
<comment type="subunit">
    <text evidence="1">Monomer.</text>
</comment>
<comment type="subcellular location">
    <subcellularLocation>
        <location evidence="1">Cytoplasm</location>
    </subcellularLocation>
</comment>
<comment type="similarity">
    <text evidence="1">Belongs to the class-I aminoacyl-tRNA synthetase family.</text>
</comment>
<evidence type="ECO:0000255" key="1">
    <source>
        <dbReference type="HAMAP-Rule" id="MF_00126"/>
    </source>
</evidence>
<feature type="chain" id="PRO_1000199097" description="Glutamine--tRNA ligase">
    <location>
        <begin position="1"/>
        <end position="554"/>
    </location>
</feature>
<feature type="region of interest" description="Interaction with tRNA" evidence="1">
    <location>
        <begin position="317"/>
        <end position="324"/>
    </location>
</feature>
<feature type="short sequence motif" description="'HIGH' region" evidence="1">
    <location>
        <begin position="34"/>
        <end position="44"/>
    </location>
</feature>
<feature type="short sequence motif" description="'KMSKS' region" evidence="1">
    <location>
        <begin position="268"/>
        <end position="272"/>
    </location>
</feature>
<feature type="binding site" evidence="1">
    <location>
        <begin position="35"/>
        <end position="37"/>
    </location>
    <ligand>
        <name>ATP</name>
        <dbReference type="ChEBI" id="CHEBI:30616"/>
    </ligand>
</feature>
<feature type="binding site" evidence="1">
    <location>
        <begin position="41"/>
        <end position="47"/>
    </location>
    <ligand>
        <name>ATP</name>
        <dbReference type="ChEBI" id="CHEBI:30616"/>
    </ligand>
</feature>
<feature type="binding site" evidence="1">
    <location>
        <position position="67"/>
    </location>
    <ligand>
        <name>L-glutamine</name>
        <dbReference type="ChEBI" id="CHEBI:58359"/>
    </ligand>
</feature>
<feature type="binding site" evidence="1">
    <location>
        <position position="212"/>
    </location>
    <ligand>
        <name>L-glutamine</name>
        <dbReference type="ChEBI" id="CHEBI:58359"/>
    </ligand>
</feature>
<feature type="binding site" evidence="1">
    <location>
        <position position="231"/>
    </location>
    <ligand>
        <name>ATP</name>
        <dbReference type="ChEBI" id="CHEBI:30616"/>
    </ligand>
</feature>
<feature type="binding site" evidence="1">
    <location>
        <begin position="261"/>
        <end position="262"/>
    </location>
    <ligand>
        <name>ATP</name>
        <dbReference type="ChEBI" id="CHEBI:30616"/>
    </ligand>
</feature>
<feature type="binding site" evidence="1">
    <location>
        <begin position="269"/>
        <end position="271"/>
    </location>
    <ligand>
        <name>ATP</name>
        <dbReference type="ChEBI" id="CHEBI:30616"/>
    </ligand>
</feature>
<dbReference type="EC" id="6.1.1.18" evidence="1"/>
<dbReference type="EMBL" id="CU928161">
    <property type="protein sequence ID" value="CAR02056.1"/>
    <property type="molecule type" value="Genomic_DNA"/>
</dbReference>
<dbReference type="RefSeq" id="WP_001287134.1">
    <property type="nucleotide sequence ID" value="NC_011742.1"/>
</dbReference>
<dbReference type="SMR" id="B7MFU7"/>
<dbReference type="KEGG" id="ecz:ECS88_0716"/>
<dbReference type="HOGENOM" id="CLU_001882_2_3_6"/>
<dbReference type="Proteomes" id="UP000000747">
    <property type="component" value="Chromosome"/>
</dbReference>
<dbReference type="GO" id="GO:0005829">
    <property type="term" value="C:cytosol"/>
    <property type="evidence" value="ECO:0007669"/>
    <property type="project" value="TreeGrafter"/>
</dbReference>
<dbReference type="GO" id="GO:0005524">
    <property type="term" value="F:ATP binding"/>
    <property type="evidence" value="ECO:0007669"/>
    <property type="project" value="UniProtKB-UniRule"/>
</dbReference>
<dbReference type="GO" id="GO:0004819">
    <property type="term" value="F:glutamine-tRNA ligase activity"/>
    <property type="evidence" value="ECO:0007669"/>
    <property type="project" value="UniProtKB-UniRule"/>
</dbReference>
<dbReference type="GO" id="GO:0006425">
    <property type="term" value="P:glutaminyl-tRNA aminoacylation"/>
    <property type="evidence" value="ECO:0007669"/>
    <property type="project" value="InterPro"/>
</dbReference>
<dbReference type="GO" id="GO:0006424">
    <property type="term" value="P:glutamyl-tRNA aminoacylation"/>
    <property type="evidence" value="ECO:0007669"/>
    <property type="project" value="UniProtKB-UniRule"/>
</dbReference>
<dbReference type="CDD" id="cd00807">
    <property type="entry name" value="GlnRS_core"/>
    <property type="match status" value="1"/>
</dbReference>
<dbReference type="FunFam" id="1.10.1160.10:FF:000001">
    <property type="entry name" value="Glutamine--tRNA ligase"/>
    <property type="match status" value="1"/>
</dbReference>
<dbReference type="FunFam" id="2.40.240.10:FF:000001">
    <property type="entry name" value="Glutamine--tRNA ligase"/>
    <property type="match status" value="1"/>
</dbReference>
<dbReference type="FunFam" id="2.40.240.10:FF:000003">
    <property type="entry name" value="Glutamine--tRNA ligase"/>
    <property type="match status" value="1"/>
</dbReference>
<dbReference type="FunFam" id="3.90.800.10:FF:000001">
    <property type="entry name" value="Glutamine--tRNA ligase"/>
    <property type="match status" value="1"/>
</dbReference>
<dbReference type="FunFam" id="3.40.50.620:FF:000037">
    <property type="entry name" value="Glutamine--tRNA ligase cytoplasmic"/>
    <property type="match status" value="1"/>
</dbReference>
<dbReference type="Gene3D" id="1.10.1160.10">
    <property type="entry name" value="Glutamyl-trna Synthetase, Domain 2"/>
    <property type="match status" value="1"/>
</dbReference>
<dbReference type="Gene3D" id="3.90.800.10">
    <property type="entry name" value="Glutamyl-tRNA Synthetase, Domain 3"/>
    <property type="match status" value="1"/>
</dbReference>
<dbReference type="Gene3D" id="3.40.50.620">
    <property type="entry name" value="HUPs"/>
    <property type="match status" value="1"/>
</dbReference>
<dbReference type="Gene3D" id="2.40.240.10">
    <property type="entry name" value="Ribosomal Protein L25, Chain P"/>
    <property type="match status" value="2"/>
</dbReference>
<dbReference type="HAMAP" id="MF_00126">
    <property type="entry name" value="Gln_tRNA_synth"/>
    <property type="match status" value="1"/>
</dbReference>
<dbReference type="InterPro" id="IPR001412">
    <property type="entry name" value="aa-tRNA-synth_I_CS"/>
</dbReference>
<dbReference type="InterPro" id="IPR004514">
    <property type="entry name" value="Gln-tRNA-synth"/>
</dbReference>
<dbReference type="InterPro" id="IPR050132">
    <property type="entry name" value="Gln/Glu-tRNA_Ligase"/>
</dbReference>
<dbReference type="InterPro" id="IPR022861">
    <property type="entry name" value="Gln_tRNA_ligase_bac"/>
</dbReference>
<dbReference type="InterPro" id="IPR000924">
    <property type="entry name" value="Glu/Gln-tRNA-synth"/>
</dbReference>
<dbReference type="InterPro" id="IPR020058">
    <property type="entry name" value="Glu/Gln-tRNA-synth_Ib_cat-dom"/>
</dbReference>
<dbReference type="InterPro" id="IPR020059">
    <property type="entry name" value="Glu/Gln-tRNA-synth_Ib_codon-bd"/>
</dbReference>
<dbReference type="InterPro" id="IPR020061">
    <property type="entry name" value="Glu_tRNA_lig_a-bdl"/>
</dbReference>
<dbReference type="InterPro" id="IPR020056">
    <property type="entry name" value="Rbsml_bL25/Gln-tRNA_synth_N"/>
</dbReference>
<dbReference type="InterPro" id="IPR011035">
    <property type="entry name" value="Ribosomal_bL25/Gln-tRNA_synth"/>
</dbReference>
<dbReference type="InterPro" id="IPR014729">
    <property type="entry name" value="Rossmann-like_a/b/a_fold"/>
</dbReference>
<dbReference type="InterPro" id="IPR049437">
    <property type="entry name" value="tRNA-synt_1c_C2"/>
</dbReference>
<dbReference type="NCBIfam" id="TIGR00440">
    <property type="entry name" value="glnS"/>
    <property type="match status" value="1"/>
</dbReference>
<dbReference type="NCBIfam" id="NF011291">
    <property type="entry name" value="PRK14703.1"/>
    <property type="match status" value="1"/>
</dbReference>
<dbReference type="PANTHER" id="PTHR43097:SF5">
    <property type="entry name" value="GLUTAMATE--TRNA LIGASE"/>
    <property type="match status" value="1"/>
</dbReference>
<dbReference type="PANTHER" id="PTHR43097">
    <property type="entry name" value="GLUTAMINE-TRNA LIGASE"/>
    <property type="match status" value="1"/>
</dbReference>
<dbReference type="Pfam" id="PF00749">
    <property type="entry name" value="tRNA-synt_1c"/>
    <property type="match status" value="1"/>
</dbReference>
<dbReference type="Pfam" id="PF03950">
    <property type="entry name" value="tRNA-synt_1c_C"/>
    <property type="match status" value="1"/>
</dbReference>
<dbReference type="Pfam" id="PF20974">
    <property type="entry name" value="tRNA-synt_1c_C2"/>
    <property type="match status" value="1"/>
</dbReference>
<dbReference type="PRINTS" id="PR00987">
    <property type="entry name" value="TRNASYNTHGLU"/>
</dbReference>
<dbReference type="SUPFAM" id="SSF52374">
    <property type="entry name" value="Nucleotidylyl transferase"/>
    <property type="match status" value="1"/>
</dbReference>
<dbReference type="SUPFAM" id="SSF50715">
    <property type="entry name" value="Ribosomal protein L25-like"/>
    <property type="match status" value="1"/>
</dbReference>
<dbReference type="PROSITE" id="PS00178">
    <property type="entry name" value="AA_TRNA_LIGASE_I"/>
    <property type="match status" value="1"/>
</dbReference>
<name>SYQ_ECO45</name>
<gene>
    <name evidence="1" type="primary">glnS</name>
    <name type="ordered locus">ECS88_0716</name>
</gene>
<organism>
    <name type="scientific">Escherichia coli O45:K1 (strain S88 / ExPEC)</name>
    <dbReference type="NCBI Taxonomy" id="585035"/>
    <lineage>
        <taxon>Bacteria</taxon>
        <taxon>Pseudomonadati</taxon>
        <taxon>Pseudomonadota</taxon>
        <taxon>Gammaproteobacteria</taxon>
        <taxon>Enterobacterales</taxon>
        <taxon>Enterobacteriaceae</taxon>
        <taxon>Escherichia</taxon>
    </lineage>
</organism>
<proteinExistence type="inferred from homology"/>
<sequence>MSEAEARPTNFIRQIIDEDLASGKHTTVHTRFPPEPNGYLHIGHAKSICLNFGIAQDYKGQCNLRFDDTNPVKEDIEYVDSIKNDVEWLGFHWSGNVRYSSDYFDQLHAYAIELINKGLAYVDELTPEQIREYRGTLTQPGKNSPYRDRSVEENLALFEKMRTGGFEEGKACLRAKIDMASPFIVMRDPVLYRIKFAEHHQTGNKWCIYPMYDFTHCISDALEGITHSLCTLEFQDNRRLYDWVLDNITIPVHPRQYEFSRLNLEYTVMSKRKLNLLVTDKHVEGWDDPRMPTISGLRRRGYTAASIREFCKRIGVTKQDNTIEMASLESCIREDLNENAPRAMAVIDPVKLVIENYQGEGEMVTMPNHPNKPEMGSRQVPFSGEIWIDRADFREEANKQYKRLVLGKEVRLRNAYVIKAERVEKDAEGNITTIFCTYDADTLSKDPADGRKVKGVIHWVSAAHALPVEIRLYDRLFSVPNPGAADDFLSVINPESLVIKQGFAEPSLKDAVAGKAFQFEREGYFCLDSRHSTAEKPVFNRTVGLRDTWAKVGE</sequence>